<feature type="chain" id="PRO_0000278347" description="ATP-dependent DNA helicase II subunit 1">
    <location>
        <begin position="1"/>
        <end position="585"/>
    </location>
</feature>
<feature type="domain" description="Ku">
    <location>
        <begin position="239"/>
        <end position="444"/>
    </location>
</feature>
<feature type="region of interest" description="Disordered" evidence="2">
    <location>
        <begin position="514"/>
        <end position="537"/>
    </location>
</feature>
<feature type="compositionally biased region" description="Basic and acidic residues" evidence="2">
    <location>
        <begin position="514"/>
        <end position="527"/>
    </location>
</feature>
<organism>
    <name type="scientific">Yarrowia lipolytica (strain CLIB 122 / E 150)</name>
    <name type="common">Yeast</name>
    <name type="synonym">Candida lipolytica</name>
    <dbReference type="NCBI Taxonomy" id="284591"/>
    <lineage>
        <taxon>Eukaryota</taxon>
        <taxon>Fungi</taxon>
        <taxon>Dikarya</taxon>
        <taxon>Ascomycota</taxon>
        <taxon>Saccharomycotina</taxon>
        <taxon>Dipodascomycetes</taxon>
        <taxon>Dipodascales</taxon>
        <taxon>Dipodascales incertae sedis</taxon>
        <taxon>Yarrowia</taxon>
    </lineage>
</organism>
<evidence type="ECO:0000250" key="1"/>
<evidence type="ECO:0000256" key="2">
    <source>
        <dbReference type="SAM" id="MobiDB-lite"/>
    </source>
</evidence>
<evidence type="ECO:0000305" key="3"/>
<reference key="1">
    <citation type="journal article" date="2004" name="Nature">
        <title>Genome evolution in yeasts.</title>
        <authorList>
            <person name="Dujon B."/>
            <person name="Sherman D."/>
            <person name="Fischer G."/>
            <person name="Durrens P."/>
            <person name="Casaregola S."/>
            <person name="Lafontaine I."/>
            <person name="de Montigny J."/>
            <person name="Marck C."/>
            <person name="Neuveglise C."/>
            <person name="Talla E."/>
            <person name="Goffard N."/>
            <person name="Frangeul L."/>
            <person name="Aigle M."/>
            <person name="Anthouard V."/>
            <person name="Babour A."/>
            <person name="Barbe V."/>
            <person name="Barnay S."/>
            <person name="Blanchin S."/>
            <person name="Beckerich J.-M."/>
            <person name="Beyne E."/>
            <person name="Bleykasten C."/>
            <person name="Boisrame A."/>
            <person name="Boyer J."/>
            <person name="Cattolico L."/>
            <person name="Confanioleri F."/>
            <person name="de Daruvar A."/>
            <person name="Despons L."/>
            <person name="Fabre E."/>
            <person name="Fairhead C."/>
            <person name="Ferry-Dumazet H."/>
            <person name="Groppi A."/>
            <person name="Hantraye F."/>
            <person name="Hennequin C."/>
            <person name="Jauniaux N."/>
            <person name="Joyet P."/>
            <person name="Kachouri R."/>
            <person name="Kerrest A."/>
            <person name="Koszul R."/>
            <person name="Lemaire M."/>
            <person name="Lesur I."/>
            <person name="Ma L."/>
            <person name="Muller H."/>
            <person name="Nicaud J.-M."/>
            <person name="Nikolski M."/>
            <person name="Oztas S."/>
            <person name="Ozier-Kalogeropoulos O."/>
            <person name="Pellenz S."/>
            <person name="Potier S."/>
            <person name="Richard G.-F."/>
            <person name="Straub M.-L."/>
            <person name="Suleau A."/>
            <person name="Swennen D."/>
            <person name="Tekaia F."/>
            <person name="Wesolowski-Louvel M."/>
            <person name="Westhof E."/>
            <person name="Wirth B."/>
            <person name="Zeniou-Meyer M."/>
            <person name="Zivanovic Y."/>
            <person name="Bolotin-Fukuhara M."/>
            <person name="Thierry A."/>
            <person name="Bouchier C."/>
            <person name="Caudron B."/>
            <person name="Scarpelli C."/>
            <person name="Gaillardin C."/>
            <person name="Weissenbach J."/>
            <person name="Wincker P."/>
            <person name="Souciet J.-L."/>
        </authorList>
    </citation>
    <scope>NUCLEOTIDE SEQUENCE [LARGE SCALE GENOMIC DNA]</scope>
    <source>
        <strain>CLIB 122 / E 150</strain>
    </source>
</reference>
<name>KU70_YARLI</name>
<protein>
    <recommendedName>
        <fullName>ATP-dependent DNA helicase II subunit 1</fullName>
        <ecNumber>3.6.4.12</ecNumber>
    </recommendedName>
    <alternativeName>
        <fullName>ATP-dependent DNA helicase II subunit Ku70</fullName>
    </alternativeName>
</protein>
<gene>
    <name type="primary">KU70</name>
    <name type="ordered locus">YALI0C08701g</name>
</gene>
<keyword id="KW-0067">ATP-binding</keyword>
<keyword id="KW-0158">Chromosome</keyword>
<keyword id="KW-0227">DNA damage</keyword>
<keyword id="KW-0233">DNA recombination</keyword>
<keyword id="KW-0234">DNA repair</keyword>
<keyword id="KW-0238">DNA-binding</keyword>
<keyword id="KW-0347">Helicase</keyword>
<keyword id="KW-0378">Hydrolase</keyword>
<keyword id="KW-0547">Nucleotide-binding</keyword>
<keyword id="KW-0539">Nucleus</keyword>
<keyword id="KW-1185">Reference proteome</keyword>
<keyword id="KW-0779">Telomere</keyword>
<accession>Q6CCK2</accession>
<dbReference type="EC" id="3.6.4.12"/>
<dbReference type="EMBL" id="CR382129">
    <property type="protein sequence ID" value="CAG81913.1"/>
    <property type="molecule type" value="Genomic_DNA"/>
</dbReference>
<dbReference type="RefSeq" id="XP_501610.1">
    <property type="nucleotide sequence ID" value="XM_501610.1"/>
</dbReference>
<dbReference type="SMR" id="Q6CCK2"/>
<dbReference type="FunCoup" id="Q6CCK2">
    <property type="interactions" value="697"/>
</dbReference>
<dbReference type="STRING" id="284591.Q6CCK2"/>
<dbReference type="EnsemblFungi" id="CAG81913">
    <property type="protein sequence ID" value="CAG81913"/>
    <property type="gene ID" value="YALI0_C08701g"/>
</dbReference>
<dbReference type="KEGG" id="yli:2910012"/>
<dbReference type="VEuPathDB" id="FungiDB:YALI0_C08701g"/>
<dbReference type="HOGENOM" id="CLU_014815_3_0_1"/>
<dbReference type="InParanoid" id="Q6CCK2"/>
<dbReference type="OMA" id="FWANVKH"/>
<dbReference type="OrthoDB" id="113228at4891"/>
<dbReference type="Proteomes" id="UP000001300">
    <property type="component" value="Chromosome C"/>
</dbReference>
<dbReference type="GO" id="GO:0000781">
    <property type="term" value="C:chromosome, telomeric region"/>
    <property type="evidence" value="ECO:0007669"/>
    <property type="project" value="UniProtKB-SubCell"/>
</dbReference>
<dbReference type="GO" id="GO:0043564">
    <property type="term" value="C:Ku70:Ku80 complex"/>
    <property type="evidence" value="ECO:0000318"/>
    <property type="project" value="GO_Central"/>
</dbReference>
<dbReference type="GO" id="GO:0005524">
    <property type="term" value="F:ATP binding"/>
    <property type="evidence" value="ECO:0007669"/>
    <property type="project" value="UniProtKB-KW"/>
</dbReference>
<dbReference type="GO" id="GO:0016887">
    <property type="term" value="F:ATP hydrolysis activity"/>
    <property type="evidence" value="ECO:0007669"/>
    <property type="project" value="RHEA"/>
</dbReference>
<dbReference type="GO" id="GO:0003684">
    <property type="term" value="F:damaged DNA binding"/>
    <property type="evidence" value="ECO:0007669"/>
    <property type="project" value="InterPro"/>
</dbReference>
<dbReference type="GO" id="GO:0003678">
    <property type="term" value="F:DNA helicase activity"/>
    <property type="evidence" value="ECO:0007669"/>
    <property type="project" value="InterPro"/>
</dbReference>
<dbReference type="GO" id="GO:0042162">
    <property type="term" value="F:telomeric DNA binding"/>
    <property type="evidence" value="ECO:0000318"/>
    <property type="project" value="GO_Central"/>
</dbReference>
<dbReference type="GO" id="GO:0006310">
    <property type="term" value="P:DNA recombination"/>
    <property type="evidence" value="ECO:0007669"/>
    <property type="project" value="UniProtKB-KW"/>
</dbReference>
<dbReference type="GO" id="GO:0006303">
    <property type="term" value="P:double-strand break repair via nonhomologous end joining"/>
    <property type="evidence" value="ECO:0000318"/>
    <property type="project" value="GO_Central"/>
</dbReference>
<dbReference type="GO" id="GO:0000723">
    <property type="term" value="P:telomere maintenance"/>
    <property type="evidence" value="ECO:0000318"/>
    <property type="project" value="GO_Central"/>
</dbReference>
<dbReference type="CDD" id="cd00788">
    <property type="entry name" value="KU70"/>
    <property type="match status" value="1"/>
</dbReference>
<dbReference type="FunFam" id="4.10.970.10:FF:000003">
    <property type="entry name" value="ATP-dependent DNA helicase II subunit 1"/>
    <property type="match status" value="1"/>
</dbReference>
<dbReference type="Gene3D" id="1.10.1600.10">
    <property type="match status" value="1"/>
</dbReference>
<dbReference type="Gene3D" id="2.40.290.10">
    <property type="match status" value="1"/>
</dbReference>
<dbReference type="Gene3D" id="4.10.970.10">
    <property type="entry name" value="Ku70, bridge and pillars"/>
    <property type="match status" value="1"/>
</dbReference>
<dbReference type="Gene3D" id="3.40.50.410">
    <property type="entry name" value="von Willebrand factor, type A domain"/>
    <property type="match status" value="1"/>
</dbReference>
<dbReference type="InterPro" id="IPR006165">
    <property type="entry name" value="Ku70"/>
</dbReference>
<dbReference type="InterPro" id="IPR006164">
    <property type="entry name" value="Ku70/Ku80_beta-barrel_dom"/>
</dbReference>
<dbReference type="InterPro" id="IPR027388">
    <property type="entry name" value="Ku70_bridge/pillars_dom_sf"/>
</dbReference>
<dbReference type="InterPro" id="IPR047087">
    <property type="entry name" value="KU70_core_dom"/>
</dbReference>
<dbReference type="InterPro" id="IPR005160">
    <property type="entry name" value="Ku_C"/>
</dbReference>
<dbReference type="InterPro" id="IPR005161">
    <property type="entry name" value="Ku_N"/>
</dbReference>
<dbReference type="InterPro" id="IPR016194">
    <property type="entry name" value="SPOC-like_C_dom_sf"/>
</dbReference>
<dbReference type="InterPro" id="IPR036465">
    <property type="entry name" value="vWFA_dom_sf"/>
</dbReference>
<dbReference type="PANTHER" id="PTHR12604">
    <property type="entry name" value="KU AUTOANTIGEN DNA HELICASE"/>
    <property type="match status" value="1"/>
</dbReference>
<dbReference type="PANTHER" id="PTHR12604:SF2">
    <property type="entry name" value="X-RAY REPAIR CROSS-COMPLEMENTING PROTEIN 6"/>
    <property type="match status" value="1"/>
</dbReference>
<dbReference type="Pfam" id="PF02735">
    <property type="entry name" value="Ku"/>
    <property type="match status" value="1"/>
</dbReference>
<dbReference type="Pfam" id="PF03730">
    <property type="entry name" value="Ku_C"/>
    <property type="match status" value="1"/>
</dbReference>
<dbReference type="Pfam" id="PF03731">
    <property type="entry name" value="Ku_N"/>
    <property type="match status" value="1"/>
</dbReference>
<dbReference type="PIRSF" id="PIRSF003033">
    <property type="entry name" value="Ku70"/>
    <property type="match status" value="1"/>
</dbReference>
<dbReference type="SMART" id="SM00559">
    <property type="entry name" value="Ku78"/>
    <property type="match status" value="1"/>
</dbReference>
<dbReference type="SUPFAM" id="SSF100939">
    <property type="entry name" value="SPOC domain-like"/>
    <property type="match status" value="1"/>
</dbReference>
<dbReference type="SUPFAM" id="SSF53300">
    <property type="entry name" value="vWA-like"/>
    <property type="match status" value="1"/>
</dbReference>
<proteinExistence type="inferred from homology"/>
<sequence>MEWISHLENDDDVLEIEDYKVRKDALLIAIQVTQNAINNGTLHKALEAAFDAVTDRIVISPQDYTGVMLFGASMQSEDDGDEFDDESDTHFILKLGLPTAAQIKRLKRLAEDPDLGERFKVQEEPHLMDVFFDMNRHFINMAPNFASRRIIYITDDDTPTTNEDDINKTRVRIEDLSHLKVKVEPLLINPSEDKTFDSSKFYALVFNEDTSVEPVEAIDLKQFINKRNVLNRSLFNVKMEIGEGLVVGVRGYLLYAEQKATSTTRKAWVYTGGEKPEIAKLESQAVTIESGRSVDKADLRKTFKFGNDYVPFTEEQLTQIRYFGEPIIRILGFHNSSDFSELFIHSVRSSMFLYPTDEKLVGSIRAFSALYQSLKNKDKMALAWVIVRKGAKPILALLIPSTKEIEGLHMVFLPFTDDIRQEPKTELVSAAPELVDATKNIFTRLRMPGGFESQRYPNPRLQWHYRVVRAMALQEEVPKVPEDKTTPKYRSIDTRVGDAIEEWNKVLQSSSKRPAEDICKAEKKVKSSDAGPPSNEQMQNMVENDIVGKLTVAELRAWGAANNVEPNGSKLKKDWVEVVKKYYGK</sequence>
<comment type="function">
    <text evidence="1">Single-stranded DNA-dependent ATP-dependent helicase. Involved in non-homologous end joining (NHEJ) DNA double strand break repair. DNA-binding is sequence-independent but has a high affinity to nicks in double-stranded DNA and to the ends of duplex DNA. Binds to naturally occurring chromosomal ends, and therefore provides chromosomal end protection. Required also for telomere recombination to repair telomeric ends in the absence of telomerase. KU70, of the KU70/KU80 heterodimer, binds to the stem loop of TLC1, the RNA component of telomerase. Involved in telomere maintenance. Interacts with telomeric repeats and subtelomeric sequences thereby controlling telomere length and protecting against subtelomeric rearrangement. Maintains telomeric chromatin, which is involved in silencing the expression of genes located at the telomere. Required for mating-type switching (By similarity).</text>
</comment>
<comment type="catalytic activity">
    <reaction>
        <text>ATP + H2O = ADP + phosphate + H(+)</text>
        <dbReference type="Rhea" id="RHEA:13065"/>
        <dbReference type="ChEBI" id="CHEBI:15377"/>
        <dbReference type="ChEBI" id="CHEBI:15378"/>
        <dbReference type="ChEBI" id="CHEBI:30616"/>
        <dbReference type="ChEBI" id="CHEBI:43474"/>
        <dbReference type="ChEBI" id="CHEBI:456216"/>
        <dbReference type="EC" id="3.6.4.12"/>
    </reaction>
</comment>
<comment type="subunit">
    <text evidence="1">Heterodimer of Ku70 and Ku80.</text>
</comment>
<comment type="subcellular location">
    <subcellularLocation>
        <location evidence="1">Nucleus</location>
    </subcellularLocation>
    <subcellularLocation>
        <location evidence="1">Chromosome</location>
        <location evidence="1">Telomere</location>
    </subcellularLocation>
</comment>
<comment type="similarity">
    <text evidence="3">Belongs to the ku70 family.</text>
</comment>